<reference key="1">
    <citation type="submission" date="2006-12" db="EMBL/GenBank/DDBJ databases">
        <title>Complete sequence of chromosome 1 of Verminephrobacter eiseniae EF01-2.</title>
        <authorList>
            <person name="Copeland A."/>
            <person name="Lucas S."/>
            <person name="Lapidus A."/>
            <person name="Barry K."/>
            <person name="Detter J.C."/>
            <person name="Glavina del Rio T."/>
            <person name="Dalin E."/>
            <person name="Tice H."/>
            <person name="Pitluck S."/>
            <person name="Chertkov O."/>
            <person name="Brettin T."/>
            <person name="Bruce D."/>
            <person name="Han C."/>
            <person name="Tapia R."/>
            <person name="Gilna P."/>
            <person name="Schmutz J."/>
            <person name="Larimer F."/>
            <person name="Land M."/>
            <person name="Hauser L."/>
            <person name="Kyrpides N."/>
            <person name="Kim E."/>
            <person name="Stahl D."/>
            <person name="Richardson P."/>
        </authorList>
    </citation>
    <scope>NUCLEOTIDE SEQUENCE [LARGE SCALE GENOMIC DNA]</scope>
    <source>
        <strain>EF01-2</strain>
    </source>
</reference>
<evidence type="ECO:0000255" key="1">
    <source>
        <dbReference type="HAMAP-Rule" id="MF_01830"/>
    </source>
</evidence>
<evidence type="ECO:0000305" key="2"/>
<accession>A1WS32</accession>
<name>Y4744_VEREI</name>
<feature type="chain" id="PRO_0000379872" description="Putative hydro-lyase Veis_4744">
    <location>
        <begin position="1"/>
        <end position="274"/>
    </location>
</feature>
<protein>
    <recommendedName>
        <fullName evidence="1">Putative hydro-lyase Veis_4744</fullName>
        <ecNumber evidence="1">4.2.1.-</ecNumber>
    </recommendedName>
</protein>
<sequence>MEWVDTGSAMQAPDATFADTREARQAIRAGRWRRHTSGLAPAYVQGNLVILPVDLASDFMRFCQSNPKPCPLLAVGQAGDPALPTLGRDIDIRTDVPAYRVYRDGVLVGEVDDLKALWRDDFVAFVLGCSFSFEHGLIEAGIPLRHVDEGKNVAMYRTNIQTVPAGPFHGPMVVSMRPMKAADAIRAVQITARVPQVHGAPVHIGDPALIGIADITQPDFGDAVRIAPDELPVFWACGVTPQAVVMAAKPALCITHSPGYMLITDMLNRDLPFA</sequence>
<organism>
    <name type="scientific">Verminephrobacter eiseniae (strain EF01-2)</name>
    <dbReference type="NCBI Taxonomy" id="391735"/>
    <lineage>
        <taxon>Bacteria</taxon>
        <taxon>Pseudomonadati</taxon>
        <taxon>Pseudomonadota</taxon>
        <taxon>Betaproteobacteria</taxon>
        <taxon>Burkholderiales</taxon>
        <taxon>Comamonadaceae</taxon>
        <taxon>Verminephrobacter</taxon>
    </lineage>
</organism>
<proteinExistence type="inferred from homology"/>
<dbReference type="EC" id="4.2.1.-" evidence="1"/>
<dbReference type="EMBL" id="CP000542">
    <property type="protein sequence ID" value="ABM60439.1"/>
    <property type="status" value="ALT_INIT"/>
    <property type="molecule type" value="Genomic_DNA"/>
</dbReference>
<dbReference type="SMR" id="A1WS32"/>
<dbReference type="STRING" id="391735.Veis_4744"/>
<dbReference type="KEGG" id="vei:Veis_4744"/>
<dbReference type="eggNOG" id="COG4336">
    <property type="taxonomic scope" value="Bacteria"/>
</dbReference>
<dbReference type="HOGENOM" id="CLU_059759_0_0_4"/>
<dbReference type="Proteomes" id="UP000000374">
    <property type="component" value="Chromosome"/>
</dbReference>
<dbReference type="GO" id="GO:0016829">
    <property type="term" value="F:lyase activity"/>
    <property type="evidence" value="ECO:0007669"/>
    <property type="project" value="UniProtKB-KW"/>
</dbReference>
<dbReference type="FunFam" id="3.30.2040.10:FF:000001">
    <property type="entry name" value="D-glutamate cyclase, mitochondrial"/>
    <property type="match status" value="1"/>
</dbReference>
<dbReference type="Gene3D" id="3.40.1640.10">
    <property type="entry name" value="PSTPO5379-like"/>
    <property type="match status" value="1"/>
</dbReference>
<dbReference type="Gene3D" id="3.30.2040.10">
    <property type="entry name" value="PSTPO5379-like domain"/>
    <property type="match status" value="1"/>
</dbReference>
<dbReference type="HAMAP" id="MF_01830">
    <property type="entry name" value="Hydro_lyase"/>
    <property type="match status" value="1"/>
</dbReference>
<dbReference type="InterPro" id="IPR009906">
    <property type="entry name" value="D-Glu_cyclase"/>
</dbReference>
<dbReference type="InterPro" id="IPR038021">
    <property type="entry name" value="Putative_hydro-lyase"/>
</dbReference>
<dbReference type="InterPro" id="IPR016938">
    <property type="entry name" value="UPF0317"/>
</dbReference>
<dbReference type="NCBIfam" id="NF003969">
    <property type="entry name" value="PRK05463.1"/>
    <property type="match status" value="1"/>
</dbReference>
<dbReference type="PANTHER" id="PTHR32022">
    <property type="entry name" value="D-GLUTAMATE CYCLASE, MITOCHONDRIAL"/>
    <property type="match status" value="1"/>
</dbReference>
<dbReference type="PANTHER" id="PTHR32022:SF10">
    <property type="entry name" value="D-GLUTAMATE CYCLASE, MITOCHONDRIAL"/>
    <property type="match status" value="1"/>
</dbReference>
<dbReference type="Pfam" id="PF07286">
    <property type="entry name" value="D-Glu_cyclase"/>
    <property type="match status" value="1"/>
</dbReference>
<dbReference type="PIRSF" id="PIRSF029755">
    <property type="entry name" value="UCP029755"/>
    <property type="match status" value="1"/>
</dbReference>
<dbReference type="SUPFAM" id="SSF160920">
    <property type="entry name" value="PSTPO5379-like"/>
    <property type="match status" value="1"/>
</dbReference>
<comment type="similarity">
    <text evidence="1">Belongs to the D-glutamate cyclase family.</text>
</comment>
<comment type="sequence caution" evidence="2">
    <conflict type="erroneous initiation">
        <sequence resource="EMBL-CDS" id="ABM60439"/>
    </conflict>
</comment>
<keyword id="KW-0456">Lyase</keyword>
<keyword id="KW-1185">Reference proteome</keyword>
<gene>
    <name type="ordered locus">Veis_4744</name>
</gene>